<reference key="1">
    <citation type="submission" date="2007-05" db="EMBL/GenBank/DDBJ databases">
        <title>Complete sequence of Pseudomonas putida F1.</title>
        <authorList>
            <consortium name="US DOE Joint Genome Institute"/>
            <person name="Copeland A."/>
            <person name="Lucas S."/>
            <person name="Lapidus A."/>
            <person name="Barry K."/>
            <person name="Detter J.C."/>
            <person name="Glavina del Rio T."/>
            <person name="Hammon N."/>
            <person name="Israni S."/>
            <person name="Dalin E."/>
            <person name="Tice H."/>
            <person name="Pitluck S."/>
            <person name="Chain P."/>
            <person name="Malfatti S."/>
            <person name="Shin M."/>
            <person name="Vergez L."/>
            <person name="Schmutz J."/>
            <person name="Larimer F."/>
            <person name="Land M."/>
            <person name="Hauser L."/>
            <person name="Kyrpides N."/>
            <person name="Lykidis A."/>
            <person name="Parales R."/>
            <person name="Richardson P."/>
        </authorList>
    </citation>
    <scope>NUCLEOTIDE SEQUENCE [LARGE SCALE GENOMIC DNA]</scope>
    <source>
        <strain>ATCC 700007 / DSM 6899 / JCM 31910 / BCRC 17059 / LMG 24140 / F1</strain>
    </source>
</reference>
<dbReference type="EC" id="1.14.14.5" evidence="1"/>
<dbReference type="EMBL" id="CP000712">
    <property type="protein sequence ID" value="ABQ76427.1"/>
    <property type="molecule type" value="Genomic_DNA"/>
</dbReference>
<dbReference type="SMR" id="A5VX17"/>
<dbReference type="KEGG" id="ppf:Pput_0253"/>
<dbReference type="eggNOG" id="COG2141">
    <property type="taxonomic scope" value="Bacteria"/>
</dbReference>
<dbReference type="HOGENOM" id="CLU_027853_1_0_6"/>
<dbReference type="GO" id="GO:0008726">
    <property type="term" value="F:alkanesulfonate monooxygenase activity"/>
    <property type="evidence" value="ECO:0007669"/>
    <property type="project" value="UniProtKB-UniRule"/>
</dbReference>
<dbReference type="GO" id="GO:0046306">
    <property type="term" value="P:alkanesulfonate catabolic process"/>
    <property type="evidence" value="ECO:0007669"/>
    <property type="project" value="TreeGrafter"/>
</dbReference>
<dbReference type="CDD" id="cd01094">
    <property type="entry name" value="Alkanesulfonate_monoxygenase"/>
    <property type="match status" value="1"/>
</dbReference>
<dbReference type="FunFam" id="3.20.20.30:FF:000001">
    <property type="entry name" value="Alkanesulfonate monooxygenase"/>
    <property type="match status" value="1"/>
</dbReference>
<dbReference type="Gene3D" id="3.20.20.30">
    <property type="entry name" value="Luciferase-like domain"/>
    <property type="match status" value="1"/>
</dbReference>
<dbReference type="HAMAP" id="MF_01229">
    <property type="entry name" value="Alkanesulf_monooxygen"/>
    <property type="match status" value="1"/>
</dbReference>
<dbReference type="InterPro" id="IPR019911">
    <property type="entry name" value="Alkanesulphonate_mOase_FMN-dep"/>
</dbReference>
<dbReference type="InterPro" id="IPR011251">
    <property type="entry name" value="Luciferase-like_dom"/>
</dbReference>
<dbReference type="InterPro" id="IPR036661">
    <property type="entry name" value="Luciferase-like_sf"/>
</dbReference>
<dbReference type="InterPro" id="IPR050172">
    <property type="entry name" value="SsuD_RutA_monooxygenase"/>
</dbReference>
<dbReference type="NCBIfam" id="TIGR03565">
    <property type="entry name" value="alk_sulf_monoox"/>
    <property type="match status" value="1"/>
</dbReference>
<dbReference type="NCBIfam" id="NF001939">
    <property type="entry name" value="PRK00719.1"/>
    <property type="match status" value="1"/>
</dbReference>
<dbReference type="PANTHER" id="PTHR42847">
    <property type="entry name" value="ALKANESULFONATE MONOOXYGENASE"/>
    <property type="match status" value="1"/>
</dbReference>
<dbReference type="PANTHER" id="PTHR42847:SF4">
    <property type="entry name" value="ALKANESULFONATE MONOOXYGENASE-RELATED"/>
    <property type="match status" value="1"/>
</dbReference>
<dbReference type="Pfam" id="PF00296">
    <property type="entry name" value="Bac_luciferase"/>
    <property type="match status" value="1"/>
</dbReference>
<dbReference type="SUPFAM" id="SSF51679">
    <property type="entry name" value="Bacterial luciferase-like"/>
    <property type="match status" value="1"/>
</dbReference>
<gene>
    <name evidence="1" type="primary">ssuD</name>
    <name type="ordered locus">Pput_0253</name>
</gene>
<sequence>MSLNIFWFLPTHGDGKYLGTSEGARAVDHGYLQQIAQAADRLGFGGVLIPTGRSCEDSWLVAASLIPVTQRLKFLVALRPGIISPTVAARQAATLDRLSNGRALFNLVTGGDPDELAGDGLHLNHQERYEASVEFTRIWRKVLEGENVDYDGKHIQVKGAKLLYPPIQQPRPSLYFGGSSEAAQDLAAEQVELYLTWGEPPAAVAEKIAQVREKAAAQGREVRFGIRLHVIVRETNEEAWAAAERLISHLDDDTISRAQASLARFDSVGQQRMAALHGGNRDNLEVSPNLWAGVGLVRGGAGTALVGDGPTVAARVKEYADLGIDTFIFSGYPHLEESYRVAELLFPHLDVQRPEQPKTGGYVSPFGEMVANDILPKSVSQS</sequence>
<keyword id="KW-0285">Flavoprotein</keyword>
<keyword id="KW-0288">FMN</keyword>
<keyword id="KW-0503">Monooxygenase</keyword>
<keyword id="KW-0560">Oxidoreductase</keyword>
<comment type="function">
    <text evidence="1">Catalyzes the desulfonation of aliphatic sulfonates.</text>
</comment>
<comment type="catalytic activity">
    <reaction evidence="1">
        <text>an alkanesulfonate + FMNH2 + O2 = an aldehyde + FMN + sulfite + H2O + 2 H(+)</text>
        <dbReference type="Rhea" id="RHEA:23064"/>
        <dbReference type="ChEBI" id="CHEBI:15377"/>
        <dbReference type="ChEBI" id="CHEBI:15378"/>
        <dbReference type="ChEBI" id="CHEBI:15379"/>
        <dbReference type="ChEBI" id="CHEBI:17359"/>
        <dbReference type="ChEBI" id="CHEBI:17478"/>
        <dbReference type="ChEBI" id="CHEBI:57618"/>
        <dbReference type="ChEBI" id="CHEBI:58210"/>
        <dbReference type="ChEBI" id="CHEBI:134249"/>
        <dbReference type="EC" id="1.14.14.5"/>
    </reaction>
</comment>
<comment type="similarity">
    <text evidence="1">Belongs to the SsuD family.</text>
</comment>
<accession>A5VX17</accession>
<name>SSUD_PSEP1</name>
<evidence type="ECO:0000255" key="1">
    <source>
        <dbReference type="HAMAP-Rule" id="MF_01229"/>
    </source>
</evidence>
<feature type="chain" id="PRO_1000066830" description="Alkanesulfonate monooxygenase">
    <location>
        <begin position="1"/>
        <end position="382"/>
    </location>
</feature>
<organism>
    <name type="scientific">Pseudomonas putida (strain ATCC 700007 / DSM 6899 / JCM 31910 / BCRC 17059 / LMG 24140 / F1)</name>
    <dbReference type="NCBI Taxonomy" id="351746"/>
    <lineage>
        <taxon>Bacteria</taxon>
        <taxon>Pseudomonadati</taxon>
        <taxon>Pseudomonadota</taxon>
        <taxon>Gammaproteobacteria</taxon>
        <taxon>Pseudomonadales</taxon>
        <taxon>Pseudomonadaceae</taxon>
        <taxon>Pseudomonas</taxon>
    </lineage>
</organism>
<protein>
    <recommendedName>
        <fullName evidence="1">Alkanesulfonate monooxygenase</fullName>
        <ecNumber evidence="1">1.14.14.5</ecNumber>
    </recommendedName>
    <alternativeName>
        <fullName evidence="1">FMNH2-dependent aliphatic sulfonate monooxygenase</fullName>
    </alternativeName>
</protein>
<proteinExistence type="inferred from homology"/>